<proteinExistence type="inferred from homology"/>
<gene>
    <name type="ordered locus">Mlg_2233</name>
</gene>
<accession>Q0A6G2</accession>
<keyword id="KW-0067">ATP-binding</keyword>
<keyword id="KW-0342">GTP-binding</keyword>
<keyword id="KW-0547">Nucleotide-binding</keyword>
<keyword id="KW-1185">Reference proteome</keyword>
<reference key="1">
    <citation type="submission" date="2006-08" db="EMBL/GenBank/DDBJ databases">
        <title>Complete sequence of Alkalilimnicola ehrilichei MLHE-1.</title>
        <authorList>
            <person name="Copeland A."/>
            <person name="Lucas S."/>
            <person name="Lapidus A."/>
            <person name="Barry K."/>
            <person name="Detter J.C."/>
            <person name="Glavina del Rio T."/>
            <person name="Hammon N."/>
            <person name="Israni S."/>
            <person name="Dalin E."/>
            <person name="Tice H."/>
            <person name="Pitluck S."/>
            <person name="Sims D."/>
            <person name="Brettin T."/>
            <person name="Bruce D."/>
            <person name="Han C."/>
            <person name="Tapia R."/>
            <person name="Gilna P."/>
            <person name="Schmutz J."/>
            <person name="Larimer F."/>
            <person name="Land M."/>
            <person name="Hauser L."/>
            <person name="Kyrpides N."/>
            <person name="Mikhailova N."/>
            <person name="Oremland R.S."/>
            <person name="Hoeft S.E."/>
            <person name="Switzer-Blum J."/>
            <person name="Kulp T."/>
            <person name="King G."/>
            <person name="Tabita R."/>
            <person name="Witte B."/>
            <person name="Santini J.M."/>
            <person name="Basu P."/>
            <person name="Hollibaugh J.T."/>
            <person name="Xie G."/>
            <person name="Stolz J.F."/>
            <person name="Richardson P."/>
        </authorList>
    </citation>
    <scope>NUCLEOTIDE SEQUENCE [LARGE SCALE GENOMIC DNA]</scope>
    <source>
        <strain>ATCC BAA-1101 / DSM 17681 / MLHE-1</strain>
    </source>
</reference>
<feature type="chain" id="PRO_0000383209" description="Nucleotide-binding protein Mlg_2233">
    <location>
        <begin position="1"/>
        <end position="288"/>
    </location>
</feature>
<feature type="binding site" evidence="1">
    <location>
        <begin position="11"/>
        <end position="18"/>
    </location>
    <ligand>
        <name>ATP</name>
        <dbReference type="ChEBI" id="CHEBI:30616"/>
    </ligand>
</feature>
<feature type="binding site" evidence="1">
    <location>
        <begin position="63"/>
        <end position="66"/>
    </location>
    <ligand>
        <name>GTP</name>
        <dbReference type="ChEBI" id="CHEBI:37565"/>
    </ligand>
</feature>
<protein>
    <recommendedName>
        <fullName evidence="1">Nucleotide-binding protein Mlg_2233</fullName>
    </recommendedName>
</protein>
<dbReference type="EMBL" id="CP000453">
    <property type="protein sequence ID" value="ABI57575.1"/>
    <property type="molecule type" value="Genomic_DNA"/>
</dbReference>
<dbReference type="RefSeq" id="WP_011629969.1">
    <property type="nucleotide sequence ID" value="NC_008340.1"/>
</dbReference>
<dbReference type="SMR" id="Q0A6G2"/>
<dbReference type="KEGG" id="aeh:Mlg_2233"/>
<dbReference type="eggNOG" id="COG1660">
    <property type="taxonomic scope" value="Bacteria"/>
</dbReference>
<dbReference type="HOGENOM" id="CLU_059558_1_1_6"/>
<dbReference type="Proteomes" id="UP000001962">
    <property type="component" value="Chromosome"/>
</dbReference>
<dbReference type="GO" id="GO:0005524">
    <property type="term" value="F:ATP binding"/>
    <property type="evidence" value="ECO:0007669"/>
    <property type="project" value="UniProtKB-UniRule"/>
</dbReference>
<dbReference type="GO" id="GO:0005525">
    <property type="term" value="F:GTP binding"/>
    <property type="evidence" value="ECO:0007669"/>
    <property type="project" value="UniProtKB-UniRule"/>
</dbReference>
<dbReference type="Gene3D" id="3.40.50.300">
    <property type="entry name" value="P-loop containing nucleotide triphosphate hydrolases"/>
    <property type="match status" value="1"/>
</dbReference>
<dbReference type="HAMAP" id="MF_00636">
    <property type="entry name" value="RapZ_like"/>
    <property type="match status" value="1"/>
</dbReference>
<dbReference type="InterPro" id="IPR027417">
    <property type="entry name" value="P-loop_NTPase"/>
</dbReference>
<dbReference type="InterPro" id="IPR005337">
    <property type="entry name" value="RapZ-like"/>
</dbReference>
<dbReference type="InterPro" id="IPR053930">
    <property type="entry name" value="RapZ-like_N"/>
</dbReference>
<dbReference type="InterPro" id="IPR053931">
    <property type="entry name" value="RapZ_C"/>
</dbReference>
<dbReference type="NCBIfam" id="NF003828">
    <property type="entry name" value="PRK05416.1"/>
    <property type="match status" value="1"/>
</dbReference>
<dbReference type="PANTHER" id="PTHR30448">
    <property type="entry name" value="RNASE ADAPTER PROTEIN RAPZ"/>
    <property type="match status" value="1"/>
</dbReference>
<dbReference type="PANTHER" id="PTHR30448:SF0">
    <property type="entry name" value="RNASE ADAPTER PROTEIN RAPZ"/>
    <property type="match status" value="1"/>
</dbReference>
<dbReference type="Pfam" id="PF22740">
    <property type="entry name" value="PapZ_C"/>
    <property type="match status" value="1"/>
</dbReference>
<dbReference type="Pfam" id="PF03668">
    <property type="entry name" value="RapZ-like_N"/>
    <property type="match status" value="1"/>
</dbReference>
<dbReference type="PIRSF" id="PIRSF005052">
    <property type="entry name" value="P-loopkin"/>
    <property type="match status" value="1"/>
</dbReference>
<dbReference type="SUPFAM" id="SSF52540">
    <property type="entry name" value="P-loop containing nucleoside triphosphate hydrolases"/>
    <property type="match status" value="1"/>
</dbReference>
<sequence>MKSIRLIIISGLSGSGKSVALHTLEDQGWYCIDNLPIGLLSAFARHVNDTCPAGGGRYAVGIDARNRPEDLDRIPAILDELQALGLNSEVLFLFASRETLITRFSETRRRHPLSDGDAALADAIAREEALLAPLRARADLTLDTSNTNVHQLRDLVRERIEHDPGRLSLLFQSFGYKHGIPPDADYVFDARCLPNPHWEPRLRPLTGLDAPVQHYLEAQPEVAELTGQIEALIATWLPAFRKAARSYVTVAIGCTGGQHRSVYLAEQLAGRFATGMDAISVRHRELNR</sequence>
<name>Y2233_ALKEH</name>
<evidence type="ECO:0000255" key="1">
    <source>
        <dbReference type="HAMAP-Rule" id="MF_00636"/>
    </source>
</evidence>
<comment type="function">
    <text evidence="1">Displays ATPase and GTPase activities.</text>
</comment>
<comment type="similarity">
    <text evidence="1">Belongs to the RapZ-like family.</text>
</comment>
<organism>
    <name type="scientific">Alkalilimnicola ehrlichii (strain ATCC BAA-1101 / DSM 17681 / MLHE-1)</name>
    <dbReference type="NCBI Taxonomy" id="187272"/>
    <lineage>
        <taxon>Bacteria</taxon>
        <taxon>Pseudomonadati</taxon>
        <taxon>Pseudomonadota</taxon>
        <taxon>Gammaproteobacteria</taxon>
        <taxon>Chromatiales</taxon>
        <taxon>Ectothiorhodospiraceae</taxon>
        <taxon>Alkalilimnicola</taxon>
    </lineage>
</organism>